<organism>
    <name type="scientific">Streptococcus pyogenes serotype M4 (strain MGAS10750)</name>
    <dbReference type="NCBI Taxonomy" id="370554"/>
    <lineage>
        <taxon>Bacteria</taxon>
        <taxon>Bacillati</taxon>
        <taxon>Bacillota</taxon>
        <taxon>Bacilli</taxon>
        <taxon>Lactobacillales</taxon>
        <taxon>Streptococcaceae</taxon>
        <taxon>Streptococcus</taxon>
    </lineage>
</organism>
<comment type="function">
    <text evidence="1">Catalyzes the addition of L-lysine to the nucleotide precursor UDP-N-acetylmuramoyl-L-alanyl-D-glutamate (UMAG) in the biosynthesis of bacterial cell-wall peptidoglycan.</text>
</comment>
<comment type="catalytic activity">
    <reaction evidence="1">
        <text>UDP-N-acetyl-alpha-D-muramoyl-L-alanyl-D-glutamate + L-lysine + ATP = UDP-N-acetyl-alpha-D-muramoyl-L-alanyl-gamma-D-glutamyl-L-lysine + ADP + phosphate + H(+)</text>
        <dbReference type="Rhea" id="RHEA:17969"/>
        <dbReference type="ChEBI" id="CHEBI:15378"/>
        <dbReference type="ChEBI" id="CHEBI:30616"/>
        <dbReference type="ChEBI" id="CHEBI:32551"/>
        <dbReference type="ChEBI" id="CHEBI:43474"/>
        <dbReference type="ChEBI" id="CHEBI:83900"/>
        <dbReference type="ChEBI" id="CHEBI:83903"/>
        <dbReference type="ChEBI" id="CHEBI:456216"/>
        <dbReference type="EC" id="6.3.2.7"/>
    </reaction>
</comment>
<comment type="pathway">
    <text evidence="1">Cell wall biogenesis; peptidoglycan biosynthesis.</text>
</comment>
<comment type="subcellular location">
    <subcellularLocation>
        <location evidence="1">Cytoplasm</location>
    </subcellularLocation>
</comment>
<comment type="PTM">
    <text evidence="1">Carboxylation is probably crucial for Mg(2+) binding and, consequently, for the gamma-phosphate positioning of ATP.</text>
</comment>
<comment type="similarity">
    <text evidence="1">Belongs to the MurCDEF family. MurE subfamily.</text>
</comment>
<protein>
    <recommendedName>
        <fullName evidence="1">UDP-N-acetylmuramoyl-L-alanyl-D-glutamate--L-lysine ligase</fullName>
        <ecNumber evidence="1">6.3.2.7</ecNumber>
    </recommendedName>
    <alternativeName>
        <fullName evidence="1">L-lysine-adding enzyme</fullName>
    </alternativeName>
    <alternativeName>
        <fullName evidence="1">UDP-MurNAc-L-Ala-D-Glu:L-Lys ligase</fullName>
    </alternativeName>
    <alternativeName>
        <fullName evidence="1">UDP-MurNAc-tripeptide synthetase</fullName>
    </alternativeName>
    <alternativeName>
        <fullName evidence="1">UDP-N-acetylmuramyl-tripeptide synthetase</fullName>
    </alternativeName>
</protein>
<accession>Q1J890</accession>
<evidence type="ECO:0000255" key="1">
    <source>
        <dbReference type="HAMAP-Rule" id="MF_00208"/>
    </source>
</evidence>
<reference key="1">
    <citation type="journal article" date="2006" name="Proc. Natl. Acad. Sci. U.S.A.">
        <title>Molecular genetic anatomy of inter- and intraserotype variation in the human bacterial pathogen group A Streptococcus.</title>
        <authorList>
            <person name="Beres S.B."/>
            <person name="Richter E.W."/>
            <person name="Nagiec M.J."/>
            <person name="Sumby P."/>
            <person name="Porcella S.F."/>
            <person name="DeLeo F.R."/>
            <person name="Musser J.M."/>
        </authorList>
    </citation>
    <scope>NUCLEOTIDE SEQUENCE [LARGE SCALE GENOMIC DNA]</scope>
    <source>
        <strain>MGAS10750</strain>
    </source>
</reference>
<name>MURE_STRPF</name>
<dbReference type="EC" id="6.3.2.7" evidence="1"/>
<dbReference type="EMBL" id="CP000262">
    <property type="protein sequence ID" value="ABF37271.1"/>
    <property type="molecule type" value="Genomic_DNA"/>
</dbReference>
<dbReference type="SMR" id="Q1J890"/>
<dbReference type="KEGG" id="spi:MGAS10750_Spy0321"/>
<dbReference type="HOGENOM" id="CLU_022291_4_2_9"/>
<dbReference type="UniPathway" id="UPA00219"/>
<dbReference type="Proteomes" id="UP000002434">
    <property type="component" value="Chromosome"/>
</dbReference>
<dbReference type="GO" id="GO:0005737">
    <property type="term" value="C:cytoplasm"/>
    <property type="evidence" value="ECO:0007669"/>
    <property type="project" value="UniProtKB-SubCell"/>
</dbReference>
<dbReference type="GO" id="GO:0005524">
    <property type="term" value="F:ATP binding"/>
    <property type="evidence" value="ECO:0007669"/>
    <property type="project" value="UniProtKB-UniRule"/>
</dbReference>
<dbReference type="GO" id="GO:0000287">
    <property type="term" value="F:magnesium ion binding"/>
    <property type="evidence" value="ECO:0007669"/>
    <property type="project" value="UniProtKB-UniRule"/>
</dbReference>
<dbReference type="GO" id="GO:0047482">
    <property type="term" value="F:UDP-N-acetylmuramoyl-L-alanyl-D-glutamate-L-lysine ligase activity"/>
    <property type="evidence" value="ECO:0007669"/>
    <property type="project" value="UniProtKB-UniRule"/>
</dbReference>
<dbReference type="GO" id="GO:0051301">
    <property type="term" value="P:cell division"/>
    <property type="evidence" value="ECO:0007669"/>
    <property type="project" value="UniProtKB-KW"/>
</dbReference>
<dbReference type="GO" id="GO:0071555">
    <property type="term" value="P:cell wall organization"/>
    <property type="evidence" value="ECO:0007669"/>
    <property type="project" value="UniProtKB-KW"/>
</dbReference>
<dbReference type="GO" id="GO:0009252">
    <property type="term" value="P:peptidoglycan biosynthetic process"/>
    <property type="evidence" value="ECO:0007669"/>
    <property type="project" value="UniProtKB-UniRule"/>
</dbReference>
<dbReference type="GO" id="GO:0008360">
    <property type="term" value="P:regulation of cell shape"/>
    <property type="evidence" value="ECO:0007669"/>
    <property type="project" value="UniProtKB-KW"/>
</dbReference>
<dbReference type="Gene3D" id="3.90.190.20">
    <property type="entry name" value="Mur ligase, C-terminal domain"/>
    <property type="match status" value="1"/>
</dbReference>
<dbReference type="Gene3D" id="3.40.1190.10">
    <property type="entry name" value="Mur-like, catalytic domain"/>
    <property type="match status" value="1"/>
</dbReference>
<dbReference type="Gene3D" id="3.40.1390.10">
    <property type="entry name" value="MurE/MurF, N-terminal domain"/>
    <property type="match status" value="1"/>
</dbReference>
<dbReference type="HAMAP" id="MF_00208">
    <property type="entry name" value="MurE"/>
    <property type="match status" value="1"/>
</dbReference>
<dbReference type="InterPro" id="IPR036565">
    <property type="entry name" value="Mur-like_cat_sf"/>
</dbReference>
<dbReference type="InterPro" id="IPR004101">
    <property type="entry name" value="Mur_ligase_C"/>
</dbReference>
<dbReference type="InterPro" id="IPR036615">
    <property type="entry name" value="Mur_ligase_C_dom_sf"/>
</dbReference>
<dbReference type="InterPro" id="IPR013221">
    <property type="entry name" value="Mur_ligase_cen"/>
</dbReference>
<dbReference type="InterPro" id="IPR035911">
    <property type="entry name" value="MurE/MurF_N"/>
</dbReference>
<dbReference type="InterPro" id="IPR005761">
    <property type="entry name" value="UDP-N-AcMur-Glu-dNH2Pim_ligase"/>
</dbReference>
<dbReference type="NCBIfam" id="TIGR01085">
    <property type="entry name" value="murE"/>
    <property type="match status" value="1"/>
</dbReference>
<dbReference type="NCBIfam" id="NF010628">
    <property type="entry name" value="PRK14022.1"/>
    <property type="match status" value="1"/>
</dbReference>
<dbReference type="PANTHER" id="PTHR23135">
    <property type="entry name" value="MUR LIGASE FAMILY MEMBER"/>
    <property type="match status" value="1"/>
</dbReference>
<dbReference type="PANTHER" id="PTHR23135:SF4">
    <property type="entry name" value="UDP-N-ACETYLMURAMOYL-L-ALANYL-D-GLUTAMATE--2,6-DIAMINOPIMELATE LIGASE MURE HOMOLOG, CHLOROPLASTIC"/>
    <property type="match status" value="1"/>
</dbReference>
<dbReference type="Pfam" id="PF02875">
    <property type="entry name" value="Mur_ligase_C"/>
    <property type="match status" value="1"/>
</dbReference>
<dbReference type="Pfam" id="PF08245">
    <property type="entry name" value="Mur_ligase_M"/>
    <property type="match status" value="1"/>
</dbReference>
<dbReference type="SUPFAM" id="SSF53623">
    <property type="entry name" value="MurD-like peptide ligases, catalytic domain"/>
    <property type="match status" value="1"/>
</dbReference>
<dbReference type="SUPFAM" id="SSF53244">
    <property type="entry name" value="MurD-like peptide ligases, peptide-binding domain"/>
    <property type="match status" value="1"/>
</dbReference>
<dbReference type="SUPFAM" id="SSF63418">
    <property type="entry name" value="MurE/MurF N-terminal domain"/>
    <property type="match status" value="1"/>
</dbReference>
<feature type="chain" id="PRO_1000012389" description="UDP-N-acetylmuramoyl-L-alanyl-D-glutamate--L-lysine ligase">
    <location>
        <begin position="1"/>
        <end position="481"/>
    </location>
</feature>
<feature type="short sequence motif" description="L-lysine recognition motif">
    <location>
        <begin position="404"/>
        <end position="407"/>
    </location>
</feature>
<feature type="binding site" evidence="1">
    <location>
        <position position="42"/>
    </location>
    <ligand>
        <name>UDP-N-acetyl-alpha-D-muramoyl-L-alanyl-D-glutamate</name>
        <dbReference type="ChEBI" id="CHEBI:83900"/>
    </ligand>
</feature>
<feature type="binding site" evidence="1">
    <location>
        <begin position="118"/>
        <end position="124"/>
    </location>
    <ligand>
        <name>ATP</name>
        <dbReference type="ChEBI" id="CHEBI:30616"/>
    </ligand>
</feature>
<feature type="binding site" evidence="1">
    <location>
        <position position="158"/>
    </location>
    <ligand>
        <name>UDP-N-acetyl-alpha-D-muramoyl-L-alanyl-D-glutamate</name>
        <dbReference type="ChEBI" id="CHEBI:83900"/>
    </ligand>
</feature>
<feature type="binding site" evidence="1">
    <location>
        <begin position="160"/>
        <end position="161"/>
    </location>
    <ligand>
        <name>UDP-N-acetyl-alpha-D-muramoyl-L-alanyl-D-glutamate</name>
        <dbReference type="ChEBI" id="CHEBI:83900"/>
    </ligand>
</feature>
<feature type="binding site" evidence="1">
    <location>
        <position position="187"/>
    </location>
    <ligand>
        <name>UDP-N-acetyl-alpha-D-muramoyl-L-alanyl-D-glutamate</name>
        <dbReference type="ChEBI" id="CHEBI:83900"/>
    </ligand>
</feature>
<feature type="binding site" evidence="1">
    <location>
        <position position="195"/>
    </location>
    <ligand>
        <name>UDP-N-acetyl-alpha-D-muramoyl-L-alanyl-D-glutamate</name>
        <dbReference type="ChEBI" id="CHEBI:83900"/>
    </ligand>
</feature>
<feature type="modified residue" description="N6-carboxylysine" evidence="1">
    <location>
        <position position="229"/>
    </location>
</feature>
<keyword id="KW-0067">ATP-binding</keyword>
<keyword id="KW-0131">Cell cycle</keyword>
<keyword id="KW-0132">Cell division</keyword>
<keyword id="KW-0133">Cell shape</keyword>
<keyword id="KW-0961">Cell wall biogenesis/degradation</keyword>
<keyword id="KW-0963">Cytoplasm</keyword>
<keyword id="KW-0436">Ligase</keyword>
<keyword id="KW-0547">Nucleotide-binding</keyword>
<keyword id="KW-0573">Peptidoglycan synthesis</keyword>
<sequence>MITIEQLLDILKKDHNFREVLDSDGYHYHYQGLSFERLSYDSRQVDGKTLFFAKGATFKADYLKEAITNGLQLYISEVDYELGIPVVLVTDIKKAMSLIAMAFYGNPQEKLKLLAFTGTKGKTTAAYFAYHMLKESYKPAMFSTMNTTLDGKTFFKSQLTTPESLDLFAMMAECVTNGMTHLIMEVSSQAYLVDRVYGLTFDVGVFLNISPDHIGPIEHPTFEDYFYHKRLLMENSRAVVINSGMDHFSFLADQVADQEHVFYGPLSDNQITTSQAFSFEAKGQLAGHYDIQLIGHFNQENAMAAGLACLRLGASLADIQKGIAKTRVPGRMEVLTMTNHAKVFVDYAHNGDSLEKLLSVVEEHQTGKLMLILGAPGNKGESRRADFGRVIHQHPNLTVILTADDPNFEDPEDISQEIASHIARPVEIISDREQAIQKAMSLCQEAKDAVIIAGKGADAYQIVKGQQVAYAGDLAIATHYL</sequence>
<gene>
    <name evidence="1" type="primary">murE</name>
    <name type="ordered locus">MGAS10750_Spy0321</name>
</gene>
<proteinExistence type="inferred from homology"/>